<feature type="chain" id="PRO_1000200310" description="Xylose isomerase">
    <location>
        <begin position="1"/>
        <end position="440"/>
    </location>
</feature>
<feature type="active site" evidence="1">
    <location>
        <position position="101"/>
    </location>
</feature>
<feature type="active site" evidence="1">
    <location>
        <position position="104"/>
    </location>
</feature>
<feature type="binding site" evidence="1">
    <location>
        <position position="232"/>
    </location>
    <ligand>
        <name>Mg(2+)</name>
        <dbReference type="ChEBI" id="CHEBI:18420"/>
        <label>1</label>
    </ligand>
</feature>
<feature type="binding site" evidence="1">
    <location>
        <position position="268"/>
    </location>
    <ligand>
        <name>Mg(2+)</name>
        <dbReference type="ChEBI" id="CHEBI:18420"/>
        <label>1</label>
    </ligand>
</feature>
<feature type="binding site" evidence="1">
    <location>
        <position position="268"/>
    </location>
    <ligand>
        <name>Mg(2+)</name>
        <dbReference type="ChEBI" id="CHEBI:18420"/>
        <label>2</label>
    </ligand>
</feature>
<feature type="binding site" evidence="1">
    <location>
        <position position="271"/>
    </location>
    <ligand>
        <name>Mg(2+)</name>
        <dbReference type="ChEBI" id="CHEBI:18420"/>
        <label>2</label>
    </ligand>
</feature>
<feature type="binding site" evidence="1">
    <location>
        <position position="296"/>
    </location>
    <ligand>
        <name>Mg(2+)</name>
        <dbReference type="ChEBI" id="CHEBI:18420"/>
        <label>1</label>
    </ligand>
</feature>
<feature type="binding site" evidence="1">
    <location>
        <position position="307"/>
    </location>
    <ligand>
        <name>Mg(2+)</name>
        <dbReference type="ChEBI" id="CHEBI:18420"/>
        <label>2</label>
    </ligand>
</feature>
<feature type="binding site" evidence="1">
    <location>
        <position position="309"/>
    </location>
    <ligand>
        <name>Mg(2+)</name>
        <dbReference type="ChEBI" id="CHEBI:18420"/>
        <label>2</label>
    </ligand>
</feature>
<feature type="binding site" evidence="1">
    <location>
        <position position="339"/>
    </location>
    <ligand>
        <name>Mg(2+)</name>
        <dbReference type="ChEBI" id="CHEBI:18420"/>
        <label>1</label>
    </ligand>
</feature>
<proteinExistence type="inferred from homology"/>
<evidence type="ECO:0000255" key="1">
    <source>
        <dbReference type="HAMAP-Rule" id="MF_00455"/>
    </source>
</evidence>
<reference key="1">
    <citation type="journal article" date="2011" name="J. Bacteriol.">
        <title>Comparative genomics of 28 Salmonella enterica isolates: evidence for CRISPR-mediated adaptive sublineage evolution.</title>
        <authorList>
            <person name="Fricke W.F."/>
            <person name="Mammel M.K."/>
            <person name="McDermott P.F."/>
            <person name="Tartera C."/>
            <person name="White D.G."/>
            <person name="Leclerc J.E."/>
            <person name="Ravel J."/>
            <person name="Cebula T.A."/>
        </authorList>
    </citation>
    <scope>NUCLEOTIDE SEQUENCE [LARGE SCALE GENOMIC DNA]</scope>
    <source>
        <strain>CVM19633</strain>
    </source>
</reference>
<keyword id="KW-0119">Carbohydrate metabolism</keyword>
<keyword id="KW-0963">Cytoplasm</keyword>
<keyword id="KW-0413">Isomerase</keyword>
<keyword id="KW-0460">Magnesium</keyword>
<keyword id="KW-0479">Metal-binding</keyword>
<keyword id="KW-0859">Xylose metabolism</keyword>
<sequence length="440" mass="49701">MQAYFDQLDRVRYEGPQSTNPLAFRHYNPDELVLGKRMEDHLRFAACYWHTFCWNGADMFGVGAFNRPWQQPGEALELAKRKADVAFEFFHKLNVPFYCFHDVDVSPEGASLKEYKNNFAQMVDVLAAKQEQSGVKLLWGTANCFTNPRYGAGAATNPDPEVFSWAATQVVTAMNATHKLGGENYVLWGGREGYETLLNTDLRQEREQIGRFMQMVVEHKHKMGFQGTLLIEPKPQEPTKHQYDYDVATVYGFLKQFGLEKEIKVNIEANHATLAGHSFHHEIATAIALGIFGSVDANRGDAQLGWDTDQFPISVEENALVMYEILKAGGFTTGGLNFDAKVRRQSTDKYDLFYGHIGAMDTMALSLKIAARMVEDGELDKRVAKRYAGWNGELGQQILKGQLSLGELAQYAEQHNLAPVHQSGHQELLENLVNRYLFDK</sequence>
<dbReference type="EC" id="5.3.1.5" evidence="1"/>
<dbReference type="EMBL" id="CP001127">
    <property type="protein sequence ID" value="ACF89253.1"/>
    <property type="molecule type" value="Genomic_DNA"/>
</dbReference>
<dbReference type="RefSeq" id="WP_001149561.1">
    <property type="nucleotide sequence ID" value="NC_011094.1"/>
</dbReference>
<dbReference type="SMR" id="B4TZ55"/>
<dbReference type="KEGG" id="sew:SeSA_A3857"/>
<dbReference type="HOGENOM" id="CLU_037261_1_0_6"/>
<dbReference type="Proteomes" id="UP000001865">
    <property type="component" value="Chromosome"/>
</dbReference>
<dbReference type="GO" id="GO:0005737">
    <property type="term" value="C:cytoplasm"/>
    <property type="evidence" value="ECO:0007669"/>
    <property type="project" value="UniProtKB-SubCell"/>
</dbReference>
<dbReference type="GO" id="GO:0000287">
    <property type="term" value="F:magnesium ion binding"/>
    <property type="evidence" value="ECO:0007669"/>
    <property type="project" value="UniProtKB-UniRule"/>
</dbReference>
<dbReference type="GO" id="GO:0009045">
    <property type="term" value="F:xylose isomerase activity"/>
    <property type="evidence" value="ECO:0007669"/>
    <property type="project" value="UniProtKB-UniRule"/>
</dbReference>
<dbReference type="GO" id="GO:0042732">
    <property type="term" value="P:D-xylose metabolic process"/>
    <property type="evidence" value="ECO:0007669"/>
    <property type="project" value="UniProtKB-UniRule"/>
</dbReference>
<dbReference type="FunFam" id="3.20.20.150:FF:000002">
    <property type="entry name" value="Xylose isomerase"/>
    <property type="match status" value="1"/>
</dbReference>
<dbReference type="Gene3D" id="3.20.20.150">
    <property type="entry name" value="Divalent-metal-dependent TIM barrel enzymes"/>
    <property type="match status" value="1"/>
</dbReference>
<dbReference type="HAMAP" id="MF_00455">
    <property type="entry name" value="Xylose_isom_A"/>
    <property type="match status" value="1"/>
</dbReference>
<dbReference type="InterPro" id="IPR036237">
    <property type="entry name" value="Xyl_isomerase-like_sf"/>
</dbReference>
<dbReference type="InterPro" id="IPR013452">
    <property type="entry name" value="Xylose_isom_bac"/>
</dbReference>
<dbReference type="InterPro" id="IPR001998">
    <property type="entry name" value="Xylose_isomerase"/>
</dbReference>
<dbReference type="NCBIfam" id="NF003998">
    <property type="entry name" value="PRK05474.1"/>
    <property type="match status" value="1"/>
</dbReference>
<dbReference type="NCBIfam" id="TIGR02630">
    <property type="entry name" value="xylose_isom_A"/>
    <property type="match status" value="1"/>
</dbReference>
<dbReference type="PANTHER" id="PTHR48408">
    <property type="match status" value="1"/>
</dbReference>
<dbReference type="PANTHER" id="PTHR48408:SF1">
    <property type="entry name" value="XYLOSE ISOMERASE"/>
    <property type="match status" value="1"/>
</dbReference>
<dbReference type="PRINTS" id="PR00688">
    <property type="entry name" value="XYLOSISMRASE"/>
</dbReference>
<dbReference type="SUPFAM" id="SSF51658">
    <property type="entry name" value="Xylose isomerase-like"/>
    <property type="match status" value="1"/>
</dbReference>
<dbReference type="PROSITE" id="PS51415">
    <property type="entry name" value="XYLOSE_ISOMERASE"/>
    <property type="match status" value="1"/>
</dbReference>
<comment type="catalytic activity">
    <reaction evidence="1">
        <text>alpha-D-xylose = alpha-D-xylulofuranose</text>
        <dbReference type="Rhea" id="RHEA:22816"/>
        <dbReference type="ChEBI" id="CHEBI:28518"/>
        <dbReference type="ChEBI" id="CHEBI:188998"/>
        <dbReference type="EC" id="5.3.1.5"/>
    </reaction>
</comment>
<comment type="cofactor">
    <cofactor evidence="1">
        <name>Mg(2+)</name>
        <dbReference type="ChEBI" id="CHEBI:18420"/>
    </cofactor>
    <text evidence="1">Binds 2 magnesium ions per subunit.</text>
</comment>
<comment type="subunit">
    <text evidence="1">Homotetramer.</text>
</comment>
<comment type="subcellular location">
    <subcellularLocation>
        <location evidence="1">Cytoplasm</location>
    </subcellularLocation>
</comment>
<comment type="similarity">
    <text evidence="1">Belongs to the xylose isomerase family.</text>
</comment>
<name>XYLA_SALSV</name>
<accession>B4TZ55</accession>
<gene>
    <name evidence="1" type="primary">xylA</name>
    <name type="ordered locus">SeSA_A3857</name>
</gene>
<protein>
    <recommendedName>
        <fullName evidence="1">Xylose isomerase</fullName>
        <ecNumber evidence="1">5.3.1.5</ecNumber>
    </recommendedName>
</protein>
<organism>
    <name type="scientific">Salmonella schwarzengrund (strain CVM19633)</name>
    <dbReference type="NCBI Taxonomy" id="439843"/>
    <lineage>
        <taxon>Bacteria</taxon>
        <taxon>Pseudomonadati</taxon>
        <taxon>Pseudomonadota</taxon>
        <taxon>Gammaproteobacteria</taxon>
        <taxon>Enterobacterales</taxon>
        <taxon>Enterobacteriaceae</taxon>
        <taxon>Salmonella</taxon>
    </lineage>
</organism>